<name>FUCM_SALCH</name>
<proteinExistence type="inferred from homology"/>
<protein>
    <recommendedName>
        <fullName evidence="1">L-fucose mutarotase</fullName>
        <ecNumber evidence="1">5.1.3.29</ecNumber>
    </recommendedName>
    <alternativeName>
        <fullName evidence="1">Fucose 1-epimerase</fullName>
    </alternativeName>
    <alternativeName>
        <fullName evidence="1">Type-2 mutarotase</fullName>
    </alternativeName>
</protein>
<evidence type="ECO:0000255" key="1">
    <source>
        <dbReference type="HAMAP-Rule" id="MF_01662"/>
    </source>
</evidence>
<reference key="1">
    <citation type="journal article" date="2005" name="Nucleic Acids Res.">
        <title>The genome sequence of Salmonella enterica serovar Choleraesuis, a highly invasive and resistant zoonotic pathogen.</title>
        <authorList>
            <person name="Chiu C.-H."/>
            <person name="Tang P."/>
            <person name="Chu C."/>
            <person name="Hu S."/>
            <person name="Bao Q."/>
            <person name="Yu J."/>
            <person name="Chou Y.-Y."/>
            <person name="Wang H.-S."/>
            <person name="Lee Y.-S."/>
        </authorList>
    </citation>
    <scope>NUCLEOTIDE SEQUENCE [LARGE SCALE GENOMIC DNA]</scope>
    <source>
        <strain>SC-B67</strain>
    </source>
</reference>
<organism>
    <name type="scientific">Salmonella choleraesuis (strain SC-B67)</name>
    <dbReference type="NCBI Taxonomy" id="321314"/>
    <lineage>
        <taxon>Bacteria</taxon>
        <taxon>Pseudomonadati</taxon>
        <taxon>Pseudomonadota</taxon>
        <taxon>Gammaproteobacteria</taxon>
        <taxon>Enterobacterales</taxon>
        <taxon>Enterobacteriaceae</taxon>
        <taxon>Salmonella</taxon>
    </lineage>
</organism>
<comment type="function">
    <text evidence="1">Involved in the anomeric conversion of L-fucose.</text>
</comment>
<comment type="catalytic activity">
    <reaction evidence="1">
        <text>alpha-L-fucose = beta-L-fucose</text>
        <dbReference type="Rhea" id="RHEA:25580"/>
        <dbReference type="ChEBI" id="CHEBI:42548"/>
        <dbReference type="ChEBI" id="CHEBI:42589"/>
        <dbReference type="EC" id="5.1.3.29"/>
    </reaction>
</comment>
<comment type="pathway">
    <text evidence="1">Carbohydrate metabolism; L-fucose metabolism.</text>
</comment>
<comment type="subunit">
    <text evidence="1">Homodecamer.</text>
</comment>
<comment type="subcellular location">
    <subcellularLocation>
        <location evidence="1">Cytoplasm</location>
    </subcellularLocation>
</comment>
<comment type="similarity">
    <text evidence="1">Belongs to the RbsD / FucU family. FucU mutarotase subfamily.</text>
</comment>
<feature type="chain" id="PRO_1000187191" description="L-fucose mutarotase">
    <location>
        <begin position="1"/>
        <end position="140"/>
    </location>
</feature>
<feature type="active site" description="Proton donor" evidence="1">
    <location>
        <position position="22"/>
    </location>
</feature>
<feature type="binding site" evidence="1">
    <location>
        <position position="30"/>
    </location>
    <ligand>
        <name>substrate</name>
    </ligand>
</feature>
<feature type="binding site" evidence="1">
    <location>
        <position position="107"/>
    </location>
    <ligand>
        <name>substrate</name>
    </ligand>
</feature>
<feature type="binding site" evidence="1">
    <location>
        <begin position="129"/>
        <end position="131"/>
    </location>
    <ligand>
        <name>substrate</name>
    </ligand>
</feature>
<gene>
    <name evidence="1" type="primary">fucU</name>
    <name type="ordered locus">SCH_2918</name>
</gene>
<dbReference type="EC" id="5.1.3.29" evidence="1"/>
<dbReference type="EMBL" id="AE017220">
    <property type="protein sequence ID" value="AAX66824.1"/>
    <property type="molecule type" value="Genomic_DNA"/>
</dbReference>
<dbReference type="RefSeq" id="WP_000920848.1">
    <property type="nucleotide sequence ID" value="NC_006905.1"/>
</dbReference>
<dbReference type="SMR" id="Q57KD8"/>
<dbReference type="KEGG" id="sec:SCH_2918"/>
<dbReference type="HOGENOM" id="CLU_120075_1_0_6"/>
<dbReference type="UniPathway" id="UPA00956"/>
<dbReference type="Proteomes" id="UP000000538">
    <property type="component" value="Chromosome"/>
</dbReference>
<dbReference type="GO" id="GO:0005737">
    <property type="term" value="C:cytoplasm"/>
    <property type="evidence" value="ECO:0007669"/>
    <property type="project" value="UniProtKB-SubCell"/>
</dbReference>
<dbReference type="GO" id="GO:0042806">
    <property type="term" value="F:fucose binding"/>
    <property type="evidence" value="ECO:0007669"/>
    <property type="project" value="InterPro"/>
</dbReference>
<dbReference type="GO" id="GO:0036373">
    <property type="term" value="F:L-fucose mutarotase activity"/>
    <property type="evidence" value="ECO:0007669"/>
    <property type="project" value="UniProtKB-EC"/>
</dbReference>
<dbReference type="GO" id="GO:0036065">
    <property type="term" value="P:fucosylation"/>
    <property type="evidence" value="ECO:0007669"/>
    <property type="project" value="TreeGrafter"/>
</dbReference>
<dbReference type="GO" id="GO:0042354">
    <property type="term" value="P:L-fucose metabolic process"/>
    <property type="evidence" value="ECO:0007669"/>
    <property type="project" value="UniProtKB-UniRule"/>
</dbReference>
<dbReference type="FunFam" id="3.40.1650.10:FF:000001">
    <property type="entry name" value="L-fucose mutarotase"/>
    <property type="match status" value="1"/>
</dbReference>
<dbReference type="Gene3D" id="3.40.1650.10">
    <property type="entry name" value="RbsD-like domain"/>
    <property type="match status" value="1"/>
</dbReference>
<dbReference type="HAMAP" id="MF_01662">
    <property type="entry name" value="L_fucose_rotase"/>
    <property type="match status" value="1"/>
</dbReference>
<dbReference type="InterPro" id="IPR023751">
    <property type="entry name" value="L-fucose_mutarotase"/>
</dbReference>
<dbReference type="InterPro" id="IPR023750">
    <property type="entry name" value="RbsD-like_sf"/>
</dbReference>
<dbReference type="InterPro" id="IPR050443">
    <property type="entry name" value="RbsD/FucU_mutarotase"/>
</dbReference>
<dbReference type="InterPro" id="IPR007721">
    <property type="entry name" value="RbsD_FucU"/>
</dbReference>
<dbReference type="NCBIfam" id="NF011949">
    <property type="entry name" value="PRK15420.1"/>
    <property type="match status" value="1"/>
</dbReference>
<dbReference type="PANTHER" id="PTHR31690">
    <property type="entry name" value="FUCOSE MUTAROTASE"/>
    <property type="match status" value="1"/>
</dbReference>
<dbReference type="PANTHER" id="PTHR31690:SF4">
    <property type="entry name" value="FUCOSE MUTAROTASE"/>
    <property type="match status" value="1"/>
</dbReference>
<dbReference type="Pfam" id="PF05025">
    <property type="entry name" value="RbsD_FucU"/>
    <property type="match status" value="1"/>
</dbReference>
<dbReference type="SUPFAM" id="SSF102546">
    <property type="entry name" value="RbsD-like"/>
    <property type="match status" value="1"/>
</dbReference>
<accession>Q57KD8</accession>
<keyword id="KW-0119">Carbohydrate metabolism</keyword>
<keyword id="KW-0963">Cytoplasm</keyword>
<keyword id="KW-0294">Fucose metabolism</keyword>
<keyword id="KW-0413">Isomerase</keyword>
<sequence>MLKTISPLISPTLLKVLAEMGHGDEIIFSDAHFPAHSLGPQVIRADGLSVSDLLRAIIPLFELDSYAPPLVMMAAVEGDTLDPSVEARYRDALSLEAPCPDIVRIDRYAFYERAQKAFAIVITGECAKYGNILLKKGVTP</sequence>